<dbReference type="EC" id="2.5.1.114"/>
<dbReference type="EMBL" id="AB179167">
    <property type="protein sequence ID" value="BAE02218.1"/>
    <property type="status" value="ALT_FRAME"/>
    <property type="molecule type" value="mRNA"/>
</dbReference>
<dbReference type="SMR" id="Q4R3U8"/>
<dbReference type="UniPathway" id="UPA00375"/>
<dbReference type="Proteomes" id="UP000233100">
    <property type="component" value="Unplaced"/>
</dbReference>
<dbReference type="GO" id="GO:0005737">
    <property type="term" value="C:cytoplasm"/>
    <property type="evidence" value="ECO:0007669"/>
    <property type="project" value="TreeGrafter"/>
</dbReference>
<dbReference type="GO" id="GO:0102522">
    <property type="term" value="F:tRNA 4-demethylwyosine alpha-amino-alpha-carboxypropyltransferase activity"/>
    <property type="evidence" value="ECO:0007669"/>
    <property type="project" value="UniProtKB-EC"/>
</dbReference>
<dbReference type="GO" id="GO:0008175">
    <property type="term" value="F:tRNA methyltransferase activity"/>
    <property type="evidence" value="ECO:0007669"/>
    <property type="project" value="TreeGrafter"/>
</dbReference>
<dbReference type="GO" id="GO:0030488">
    <property type="term" value="P:tRNA methylation"/>
    <property type="evidence" value="ECO:0007669"/>
    <property type="project" value="TreeGrafter"/>
</dbReference>
<dbReference type="GO" id="GO:0031591">
    <property type="term" value="P:wybutosine biosynthetic process"/>
    <property type="evidence" value="ECO:0007669"/>
    <property type="project" value="TreeGrafter"/>
</dbReference>
<dbReference type="CDD" id="cd02440">
    <property type="entry name" value="AdoMet_MTases"/>
    <property type="match status" value="1"/>
</dbReference>
<dbReference type="FunFam" id="3.30.300.110:FF:000002">
    <property type="entry name" value="tRNA wybutosine-synthesizing protein 2 homolog"/>
    <property type="match status" value="1"/>
</dbReference>
<dbReference type="FunFam" id="3.40.50.150:FF:000201">
    <property type="entry name" value="tRNA wybutosine-synthesizing protein 2 homolog"/>
    <property type="match status" value="1"/>
</dbReference>
<dbReference type="Gene3D" id="3.30.300.110">
    <property type="entry name" value="Met-10+ protein-like domains"/>
    <property type="match status" value="1"/>
</dbReference>
<dbReference type="Gene3D" id="3.40.50.150">
    <property type="entry name" value="Vaccinia Virus protein VP39"/>
    <property type="match status" value="1"/>
</dbReference>
<dbReference type="InterPro" id="IPR030382">
    <property type="entry name" value="MeTrfase_TRM5/TYW2"/>
</dbReference>
<dbReference type="InterPro" id="IPR029063">
    <property type="entry name" value="SAM-dependent_MTases_sf"/>
</dbReference>
<dbReference type="InterPro" id="IPR056743">
    <property type="entry name" value="TRM5-TYW2-like_MTfase"/>
</dbReference>
<dbReference type="InterPro" id="IPR056744">
    <property type="entry name" value="TRM5/TYW2-like_N"/>
</dbReference>
<dbReference type="InterPro" id="IPR056745">
    <property type="entry name" value="TYW2_N"/>
</dbReference>
<dbReference type="PANTHER" id="PTHR23245">
    <property type="entry name" value="TRNA METHYLTRANSFERASE"/>
    <property type="match status" value="1"/>
</dbReference>
<dbReference type="PANTHER" id="PTHR23245:SF25">
    <property type="entry name" value="TRNA WYBUTOSINE-SYNTHESIZING PROTEIN 2 HOMOLOG"/>
    <property type="match status" value="1"/>
</dbReference>
<dbReference type="Pfam" id="PF02475">
    <property type="entry name" value="TRM5-TYW2_MTfase"/>
    <property type="match status" value="1"/>
</dbReference>
<dbReference type="Pfam" id="PF25132">
    <property type="entry name" value="TYW2_N"/>
    <property type="match status" value="1"/>
</dbReference>
<dbReference type="Pfam" id="PF25133">
    <property type="entry name" value="TYW2_N_2"/>
    <property type="match status" value="1"/>
</dbReference>
<dbReference type="SUPFAM" id="SSF53335">
    <property type="entry name" value="S-adenosyl-L-methionine-dependent methyltransferases"/>
    <property type="match status" value="1"/>
</dbReference>
<dbReference type="PROSITE" id="PS51684">
    <property type="entry name" value="SAM_MT_TRM5_TYW2"/>
    <property type="match status" value="1"/>
</dbReference>
<evidence type="ECO:0000250" key="1"/>
<evidence type="ECO:0000255" key="2">
    <source>
        <dbReference type="PROSITE-ProRule" id="PRU01021"/>
    </source>
</evidence>
<evidence type="ECO:0000305" key="3"/>
<comment type="function">
    <text evidence="1">S-adenosyl-L-methionine-dependent transferase that acts as a component of the wybutosine biosynthesis pathway. Wybutosine is a hyper modified guanosine with a tricyclic base found at the 3'-position adjacent to the anticodon of eukaryotic phenylalanine tRNA. Catalyzes the transfer of the alpha-amino-alpha-carboxypropyl (acp) group from S-adenosyl-L-methionine to the C-7 position of 4-demethylwyosine (imG-14) to produce wybutosine-86 (By similarity).</text>
</comment>
<comment type="catalytic activity">
    <reaction>
        <text>4-demethylwyosine(37) in tRNA(Phe) + S-adenosyl-L-methionine = 4-demethyl-7-[(3S)-3-amino-3-carboxypropyl]wyosine(37) in tRNA(Phe) + S-methyl-5'-thioadenosine + H(+)</text>
        <dbReference type="Rhea" id="RHEA:36355"/>
        <dbReference type="Rhea" id="RHEA-COMP:10164"/>
        <dbReference type="Rhea" id="RHEA-COMP:10378"/>
        <dbReference type="ChEBI" id="CHEBI:15378"/>
        <dbReference type="ChEBI" id="CHEBI:17509"/>
        <dbReference type="ChEBI" id="CHEBI:59789"/>
        <dbReference type="ChEBI" id="CHEBI:64315"/>
        <dbReference type="ChEBI" id="CHEBI:73550"/>
        <dbReference type="EC" id="2.5.1.114"/>
    </reaction>
</comment>
<comment type="pathway">
    <text>tRNA modification; wybutosine-tRNA(Phe) biosynthesis.</text>
</comment>
<comment type="similarity">
    <text evidence="2">Belongs to the class I-like SAM-binding methyltransferase superfamily. TRM5/TYW2 family.</text>
</comment>
<comment type="sequence caution" evidence="3">
    <conflict type="frameshift">
        <sequence resource="EMBL-CDS" id="BAE02218"/>
    </conflict>
</comment>
<gene>
    <name type="primary">TRMT12</name>
    <name type="synonym">TYW2</name>
    <name type="ORF">QtsA-14055</name>
</gene>
<organism>
    <name type="scientific">Macaca fascicularis</name>
    <name type="common">Crab-eating macaque</name>
    <name type="synonym">Cynomolgus monkey</name>
    <dbReference type="NCBI Taxonomy" id="9541"/>
    <lineage>
        <taxon>Eukaryota</taxon>
        <taxon>Metazoa</taxon>
        <taxon>Chordata</taxon>
        <taxon>Craniata</taxon>
        <taxon>Vertebrata</taxon>
        <taxon>Euteleostomi</taxon>
        <taxon>Mammalia</taxon>
        <taxon>Eutheria</taxon>
        <taxon>Euarchontoglires</taxon>
        <taxon>Primates</taxon>
        <taxon>Haplorrhini</taxon>
        <taxon>Catarrhini</taxon>
        <taxon>Cercopithecidae</taxon>
        <taxon>Cercopithecinae</taxon>
        <taxon>Macaca</taxon>
    </lineage>
</organism>
<feature type="chain" id="PRO_0000281837" description="tRNA wybutosine-synthesizing protein 2 homolog">
    <location>
        <begin position="1"/>
        <end position="448"/>
    </location>
</feature>
<feature type="binding site" evidence="2">
    <location>
        <position position="218"/>
    </location>
    <ligand>
        <name>S-adenosyl-L-methionine</name>
        <dbReference type="ChEBI" id="CHEBI:59789"/>
    </ligand>
</feature>
<feature type="binding site" evidence="2">
    <location>
        <position position="225"/>
    </location>
    <ligand>
        <name>S-adenosyl-L-methionine</name>
        <dbReference type="ChEBI" id="CHEBI:59789"/>
    </ligand>
</feature>
<feature type="binding site" evidence="2">
    <location>
        <position position="265"/>
    </location>
    <ligand>
        <name>S-adenosyl-L-methionine</name>
        <dbReference type="ChEBI" id="CHEBI:59789"/>
    </ligand>
</feature>
<feature type="binding site" evidence="2">
    <location>
        <begin position="293"/>
        <end position="294"/>
    </location>
    <ligand>
        <name>S-adenosyl-L-methionine</name>
        <dbReference type="ChEBI" id="CHEBI:59789"/>
    </ligand>
</feature>
<protein>
    <recommendedName>
        <fullName>tRNA wybutosine-synthesizing protein 2 homolog</fullName>
        <shortName>tRNA-yW-synthesizing protein 2</shortName>
        <ecNumber>2.5.1.114</ecNumber>
    </recommendedName>
    <alternativeName>
        <fullName>tRNA(Phe) (4-demethylwyosine(37)-C(7)) aminocarboxypropyltransferase</fullName>
    </alternativeName>
</protein>
<accession>Q4R3U8</accession>
<keyword id="KW-1185">Reference proteome</keyword>
<keyword id="KW-0949">S-adenosyl-L-methionine</keyword>
<keyword id="KW-0808">Transferase</keyword>
<keyword id="KW-0819">tRNA processing</keyword>
<proteinExistence type="evidence at transcript level"/>
<name>TYW2_MACFA</name>
<sequence length="448" mass="50254">MGENVVVSNMERETGKPVAVVAVVTEPRFTQRYREYLERQKLFDTQHRVEKMPDGWVALPVLGETLPEQHLQELRNRVAPGSACMLTRLPDPVPSKRAQGCSPAQKLCLEVSRWVEGRGVKWSAELEADLPRSWQRHGNLLLLSEDCFQANQWKNLGPELWETVASALGVQRLAKRGRVSPDGTRTPAVTLLLGDHGWVEHVDNGILYKFDVTQCMFSFGNITEKLRVASLSCAGEVLVDLYAGIGYFTLPFLVHAGAAFVHACEWNPHAVVALRNNLEINGVADRCQIHFGDNRKLKLSNIADRVILGLIPSSEEGWPIACQVLRQDAGGILHIHQNVESFPGKNLQPLEVSKTEKEHWLYPQQITTNQWKNGATRDTRGKMLSPATKPEWQRWAESAETRIATLLQQVHGKPWKTQILHIQPVKSYAPHVDHIVLDLECCPCPSVG</sequence>
<reference key="1">
    <citation type="submission" date="2005-06" db="EMBL/GenBank/DDBJ databases">
        <title>DNA sequences of macaque genes expressed in brain or testis and its evolutionary implications.</title>
        <authorList>
            <consortium name="International consortium for macaque cDNA sequencing and analysis"/>
        </authorList>
    </citation>
    <scope>NUCLEOTIDE SEQUENCE [LARGE SCALE MRNA]</scope>
    <source>
        <tissue>Testis</tissue>
    </source>
</reference>